<evidence type="ECO:0000250" key="1"/>
<evidence type="ECO:0000255" key="2"/>
<evidence type="ECO:0000305" key="3"/>
<organism>
    <name type="scientific">Schizosaccharomyces pombe (strain 972 / ATCC 24843)</name>
    <name type="common">Fission yeast</name>
    <dbReference type="NCBI Taxonomy" id="284812"/>
    <lineage>
        <taxon>Eukaryota</taxon>
        <taxon>Fungi</taxon>
        <taxon>Dikarya</taxon>
        <taxon>Ascomycota</taxon>
        <taxon>Taphrinomycotina</taxon>
        <taxon>Schizosaccharomycetes</taxon>
        <taxon>Schizosaccharomycetales</taxon>
        <taxon>Schizosaccharomycetaceae</taxon>
        <taxon>Schizosaccharomyces</taxon>
    </lineage>
</organism>
<feature type="chain" id="PRO_0000246308" description="Protein pbn1">
    <location>
        <begin position="1"/>
        <end position="332"/>
    </location>
</feature>
<feature type="topological domain" description="Lumenal" evidence="2">
    <location>
        <begin position="1"/>
        <end position="301"/>
    </location>
</feature>
<feature type="transmembrane region" description="Helical" evidence="2">
    <location>
        <begin position="302"/>
        <end position="324"/>
    </location>
</feature>
<feature type="topological domain" description="Cytoplasmic" evidence="2">
    <location>
        <begin position="325"/>
        <end position="332"/>
    </location>
</feature>
<feature type="glycosylation site" description="N-linked (GlcNAc...) asparagine" evidence="2">
    <location>
        <position position="36"/>
    </location>
</feature>
<feature type="glycosylation site" description="N-linked (GlcNAc...) asparagine" evidence="2">
    <location>
        <position position="56"/>
    </location>
</feature>
<feature type="glycosylation site" description="N-linked (GlcNAc...) asparagine" evidence="2">
    <location>
        <position position="112"/>
    </location>
</feature>
<feature type="glycosylation site" description="N-linked (GlcNAc...) asparagine" evidence="2">
    <location>
        <position position="206"/>
    </location>
</feature>
<name>PBN1_SCHPO</name>
<proteinExistence type="inferred from homology"/>
<gene>
    <name type="primary">pbn1</name>
    <name type="ORF">SPCC1919.02</name>
</gene>
<protein>
    <recommendedName>
        <fullName>Protein pbn1</fullName>
    </recommendedName>
</protein>
<comment type="function">
    <text evidence="1">Required for proper folding and/or the stability of a subset of proteins in the endoplasmic reticulum. Component of glycosylphosphatidylinositol-mannosyltransferase 1 which transfers the first of the 4 mannoses in the GPI-anchor precursors during GPI-anchor biosynthesis. Probably acts by stabilizing the mannosyltransferase gpi14 (By similarity).</text>
</comment>
<comment type="pathway">
    <text>Glycolipid biosynthesis; glycosylphosphatidylinositol-anchor biosynthesis.</text>
</comment>
<comment type="subcellular location">
    <subcellularLocation>
        <location evidence="1">Endoplasmic reticulum membrane</location>
        <topology evidence="1">Single-pass type III membrane protein</topology>
    </subcellularLocation>
</comment>
<comment type="similarity">
    <text evidence="3">Belongs to the PIGX family.</text>
</comment>
<dbReference type="EMBL" id="CU329672">
    <property type="protein sequence ID" value="CAA22633.1"/>
    <property type="molecule type" value="Genomic_DNA"/>
</dbReference>
<dbReference type="PIR" id="T41227">
    <property type="entry name" value="T41227"/>
</dbReference>
<dbReference type="RefSeq" id="NP_588484.1">
    <property type="nucleotide sequence ID" value="NM_001023475.2"/>
</dbReference>
<dbReference type="FunCoup" id="O94472">
    <property type="interactions" value="4"/>
</dbReference>
<dbReference type="STRING" id="284812.O94472"/>
<dbReference type="GlyCosmos" id="O94472">
    <property type="glycosylation" value="4 sites, No reported glycans"/>
</dbReference>
<dbReference type="iPTMnet" id="O94472"/>
<dbReference type="PaxDb" id="4896-SPCC1919.02.1"/>
<dbReference type="EnsemblFungi" id="SPCC1919.02.1">
    <property type="protein sequence ID" value="SPCC1919.02.1:pep"/>
    <property type="gene ID" value="SPCC1919.02"/>
</dbReference>
<dbReference type="GeneID" id="2539243"/>
<dbReference type="KEGG" id="spo:2539243"/>
<dbReference type="PomBase" id="SPCC1919.02">
    <property type="gene designation" value="pbn1"/>
</dbReference>
<dbReference type="VEuPathDB" id="FungiDB:SPCC1919.02"/>
<dbReference type="eggNOG" id="ENOG502QS8N">
    <property type="taxonomic scope" value="Eukaryota"/>
</dbReference>
<dbReference type="HOGENOM" id="CLU_837176_0_0_1"/>
<dbReference type="InParanoid" id="O94472"/>
<dbReference type="OMA" id="ENYWVET"/>
<dbReference type="PhylomeDB" id="O94472"/>
<dbReference type="UniPathway" id="UPA00196"/>
<dbReference type="PRO" id="PR:O94472"/>
<dbReference type="Proteomes" id="UP000002485">
    <property type="component" value="Chromosome III"/>
</dbReference>
<dbReference type="GO" id="GO:0005789">
    <property type="term" value="C:endoplasmic reticulum membrane"/>
    <property type="evidence" value="ECO:0000305"/>
    <property type="project" value="PomBase"/>
</dbReference>
<dbReference type="GO" id="GO:1990529">
    <property type="term" value="C:glycosylphosphatidylinositol-mannosyltransferase I complex"/>
    <property type="evidence" value="ECO:0000318"/>
    <property type="project" value="GO_Central"/>
</dbReference>
<dbReference type="GO" id="GO:0030234">
    <property type="term" value="F:enzyme regulator activity"/>
    <property type="evidence" value="ECO:0000266"/>
    <property type="project" value="PomBase"/>
</dbReference>
<dbReference type="GO" id="GO:0071555">
    <property type="term" value="P:cell wall organization"/>
    <property type="evidence" value="ECO:0007669"/>
    <property type="project" value="UniProtKB-KW"/>
</dbReference>
<dbReference type="GO" id="GO:0006506">
    <property type="term" value="P:GPI anchor biosynthetic process"/>
    <property type="evidence" value="ECO:0000318"/>
    <property type="project" value="GO_Central"/>
</dbReference>
<dbReference type="InterPro" id="IPR042322">
    <property type="entry name" value="Pbn1"/>
</dbReference>
<dbReference type="InterPro" id="IPR013233">
    <property type="entry name" value="PIG-X/PBN1"/>
</dbReference>
<dbReference type="PANTHER" id="PTHR28533">
    <property type="entry name" value="PROTEIN PBN1"/>
    <property type="match status" value="1"/>
</dbReference>
<dbReference type="PANTHER" id="PTHR28533:SF1">
    <property type="entry name" value="PROTEIN PBN1"/>
    <property type="match status" value="1"/>
</dbReference>
<dbReference type="Pfam" id="PF08320">
    <property type="entry name" value="PIG-X"/>
    <property type="match status" value="1"/>
</dbReference>
<dbReference type="SMART" id="SM00780">
    <property type="entry name" value="PIG-X"/>
    <property type="match status" value="1"/>
</dbReference>
<keyword id="KW-0961">Cell wall biogenesis/degradation</keyword>
<keyword id="KW-0256">Endoplasmic reticulum</keyword>
<keyword id="KW-0325">Glycoprotein</keyword>
<keyword id="KW-0337">GPI-anchor biosynthesis</keyword>
<keyword id="KW-0472">Membrane</keyword>
<keyword id="KW-1185">Reference proteome</keyword>
<keyword id="KW-0812">Transmembrane</keyword>
<keyword id="KW-1133">Transmembrane helix</keyword>
<reference key="1">
    <citation type="journal article" date="2002" name="Nature">
        <title>The genome sequence of Schizosaccharomyces pombe.</title>
        <authorList>
            <person name="Wood V."/>
            <person name="Gwilliam R."/>
            <person name="Rajandream M.A."/>
            <person name="Lyne M.H."/>
            <person name="Lyne R."/>
            <person name="Stewart A."/>
            <person name="Sgouros J.G."/>
            <person name="Peat N."/>
            <person name="Hayles J."/>
            <person name="Baker S.G."/>
            <person name="Basham D."/>
            <person name="Bowman S."/>
            <person name="Brooks K."/>
            <person name="Brown D."/>
            <person name="Brown S."/>
            <person name="Chillingworth T."/>
            <person name="Churcher C.M."/>
            <person name="Collins M."/>
            <person name="Connor R."/>
            <person name="Cronin A."/>
            <person name="Davis P."/>
            <person name="Feltwell T."/>
            <person name="Fraser A."/>
            <person name="Gentles S."/>
            <person name="Goble A."/>
            <person name="Hamlin N."/>
            <person name="Harris D.E."/>
            <person name="Hidalgo J."/>
            <person name="Hodgson G."/>
            <person name="Holroyd S."/>
            <person name="Hornsby T."/>
            <person name="Howarth S."/>
            <person name="Huckle E.J."/>
            <person name="Hunt S."/>
            <person name="Jagels K."/>
            <person name="James K.D."/>
            <person name="Jones L."/>
            <person name="Jones M."/>
            <person name="Leather S."/>
            <person name="McDonald S."/>
            <person name="McLean J."/>
            <person name="Mooney P."/>
            <person name="Moule S."/>
            <person name="Mungall K.L."/>
            <person name="Murphy L.D."/>
            <person name="Niblett D."/>
            <person name="Odell C."/>
            <person name="Oliver K."/>
            <person name="O'Neil S."/>
            <person name="Pearson D."/>
            <person name="Quail M.A."/>
            <person name="Rabbinowitsch E."/>
            <person name="Rutherford K.M."/>
            <person name="Rutter S."/>
            <person name="Saunders D."/>
            <person name="Seeger K."/>
            <person name="Sharp S."/>
            <person name="Skelton J."/>
            <person name="Simmonds M.N."/>
            <person name="Squares R."/>
            <person name="Squares S."/>
            <person name="Stevens K."/>
            <person name="Taylor K."/>
            <person name="Taylor R.G."/>
            <person name="Tivey A."/>
            <person name="Walsh S.V."/>
            <person name="Warren T."/>
            <person name="Whitehead S."/>
            <person name="Woodward J.R."/>
            <person name="Volckaert G."/>
            <person name="Aert R."/>
            <person name="Robben J."/>
            <person name="Grymonprez B."/>
            <person name="Weltjens I."/>
            <person name="Vanstreels E."/>
            <person name="Rieger M."/>
            <person name="Schaefer M."/>
            <person name="Mueller-Auer S."/>
            <person name="Gabel C."/>
            <person name="Fuchs M."/>
            <person name="Duesterhoeft A."/>
            <person name="Fritzc C."/>
            <person name="Holzer E."/>
            <person name="Moestl D."/>
            <person name="Hilbert H."/>
            <person name="Borzym K."/>
            <person name="Langer I."/>
            <person name="Beck A."/>
            <person name="Lehrach H."/>
            <person name="Reinhardt R."/>
            <person name="Pohl T.M."/>
            <person name="Eger P."/>
            <person name="Zimmermann W."/>
            <person name="Wedler H."/>
            <person name="Wambutt R."/>
            <person name="Purnelle B."/>
            <person name="Goffeau A."/>
            <person name="Cadieu E."/>
            <person name="Dreano S."/>
            <person name="Gloux S."/>
            <person name="Lelaure V."/>
            <person name="Mottier S."/>
            <person name="Galibert F."/>
            <person name="Aves S.J."/>
            <person name="Xiang Z."/>
            <person name="Hunt C."/>
            <person name="Moore K."/>
            <person name="Hurst S.M."/>
            <person name="Lucas M."/>
            <person name="Rochet M."/>
            <person name="Gaillardin C."/>
            <person name="Tallada V.A."/>
            <person name="Garzon A."/>
            <person name="Thode G."/>
            <person name="Daga R.R."/>
            <person name="Cruzado L."/>
            <person name="Jimenez J."/>
            <person name="Sanchez M."/>
            <person name="del Rey F."/>
            <person name="Benito J."/>
            <person name="Dominguez A."/>
            <person name="Revuelta J.L."/>
            <person name="Moreno S."/>
            <person name="Armstrong J."/>
            <person name="Forsburg S.L."/>
            <person name="Cerutti L."/>
            <person name="Lowe T."/>
            <person name="McCombie W.R."/>
            <person name="Paulsen I."/>
            <person name="Potashkin J."/>
            <person name="Shpakovski G.V."/>
            <person name="Ussery D."/>
            <person name="Barrell B.G."/>
            <person name="Nurse P."/>
        </authorList>
    </citation>
    <scope>NUCLEOTIDE SEQUENCE [LARGE SCALE GENOMIC DNA]</scope>
    <source>
        <strain>972 / ATCC 24843</strain>
    </source>
</reference>
<accession>O94472</accession>
<sequence>MDLQRTNQDTGTTTLFKVVISNTVNYLPKGVWILRNNTIDSLSIAKQFREIKNNINISHLSRENYWVETPFGKVFHSEVVSEEFMQIFIDKGNKALNNEEMIFACMSEKGWNVSLETVPNLDIPVGSYETQLGLPVGLHPKLHVHLKNLHKPEDECSLQGFMYIPPTLFIDRYELSNIAEMHADNLGHVLGIWGETDLEAPSYKLNGTGSFFWFDIYTDDGLLQKDYIDTIIPLHTRYQSPLKGQTYLKTSLTNPKFFWNCDTEDKVNDFRFLFSSKNKYTLQNDPTTLSISIPIADLSYKHVVEWVTNGVAIFSFFYLLLYLWKRFRYAKD</sequence>